<reference key="1">
    <citation type="submission" date="2003-12" db="EMBL/GenBank/DDBJ databases">
        <title>Bats and birds: flying in the face of mtDNA evolutionary rates.</title>
        <authorList>
            <person name="Worthington Wilmer J.M."/>
            <person name="Schneider C.J."/>
            <person name="Sorenson M.D."/>
        </authorList>
    </citation>
    <scope>NUCLEOTIDE SEQUENCE [GENOMIC DNA]</scope>
    <source>
        <strain>Isolate 1</strain>
    </source>
</reference>
<geneLocation type="mitochondrion"/>
<protein>
    <recommendedName>
        <fullName evidence="1">NADH-ubiquinone oxidoreductase chain 2</fullName>
        <ecNumber evidence="1">7.1.1.2</ecNumber>
    </recommendedName>
    <alternativeName>
        <fullName>NADH dehydrogenase subunit 2</fullName>
    </alternativeName>
</protein>
<comment type="function">
    <text evidence="1">Core subunit of the mitochondrial membrane respiratory chain NADH dehydrogenase (Complex I) which catalyzes electron transfer from NADH through the respiratory chain, using ubiquinone as an electron acceptor. Essential for the catalytic activity and assembly of complex I.</text>
</comment>
<comment type="catalytic activity">
    <reaction evidence="1">
        <text>a ubiquinone + NADH + 5 H(+)(in) = a ubiquinol + NAD(+) + 4 H(+)(out)</text>
        <dbReference type="Rhea" id="RHEA:29091"/>
        <dbReference type="Rhea" id="RHEA-COMP:9565"/>
        <dbReference type="Rhea" id="RHEA-COMP:9566"/>
        <dbReference type="ChEBI" id="CHEBI:15378"/>
        <dbReference type="ChEBI" id="CHEBI:16389"/>
        <dbReference type="ChEBI" id="CHEBI:17976"/>
        <dbReference type="ChEBI" id="CHEBI:57540"/>
        <dbReference type="ChEBI" id="CHEBI:57945"/>
        <dbReference type="EC" id="7.1.1.2"/>
    </reaction>
</comment>
<comment type="subunit">
    <text evidence="1 2">Core subunit of respiratory chain NADH dehydrogenase (Complex I) which is composed of 45 different subunits. Interacts with TMEM242 (By similarity).</text>
</comment>
<comment type="subcellular location">
    <subcellularLocation>
        <location evidence="2">Mitochondrion inner membrane</location>
        <topology evidence="3">Multi-pass membrane protein</topology>
    </subcellularLocation>
</comment>
<comment type="similarity">
    <text evidence="4">Belongs to the complex I subunit 2 family.</text>
</comment>
<accession>Q330B3</accession>
<organism>
    <name type="scientific">Natalus tumidirostris</name>
    <name type="common">Trinidadian funnel-eared bat</name>
    <dbReference type="NCBI Taxonomy" id="59487"/>
    <lineage>
        <taxon>Eukaryota</taxon>
        <taxon>Metazoa</taxon>
        <taxon>Chordata</taxon>
        <taxon>Craniata</taxon>
        <taxon>Vertebrata</taxon>
        <taxon>Euteleostomi</taxon>
        <taxon>Mammalia</taxon>
        <taxon>Eutheria</taxon>
        <taxon>Laurasiatheria</taxon>
        <taxon>Chiroptera</taxon>
        <taxon>Yangochiroptera</taxon>
        <taxon>Natalidae</taxon>
        <taxon>Natalus</taxon>
    </lineage>
</organism>
<feature type="chain" id="PRO_0000226710" description="NADH-ubiquinone oxidoreductase chain 2">
    <location>
        <begin position="1"/>
        <end position="347"/>
    </location>
</feature>
<feature type="transmembrane region" description="Helical" evidence="3">
    <location>
        <begin position="1"/>
        <end position="21"/>
    </location>
</feature>
<feature type="transmembrane region" description="Helical" evidence="3">
    <location>
        <begin position="25"/>
        <end position="45"/>
    </location>
</feature>
<feature type="transmembrane region" description="Helical" evidence="3">
    <location>
        <begin position="59"/>
        <end position="79"/>
    </location>
</feature>
<feature type="transmembrane region" description="Helical" evidence="3">
    <location>
        <begin position="96"/>
        <end position="116"/>
    </location>
</feature>
<feature type="transmembrane region" description="Helical" evidence="3">
    <location>
        <begin position="127"/>
        <end position="147"/>
    </location>
</feature>
<feature type="transmembrane region" description="Helical" evidence="3">
    <location>
        <begin position="149"/>
        <end position="169"/>
    </location>
</feature>
<feature type="transmembrane region" description="Helical" evidence="3">
    <location>
        <begin position="178"/>
        <end position="198"/>
    </location>
</feature>
<feature type="transmembrane region" description="Helical" evidence="3">
    <location>
        <begin position="200"/>
        <end position="220"/>
    </location>
</feature>
<feature type="transmembrane region" description="Helical" evidence="3">
    <location>
        <begin position="237"/>
        <end position="257"/>
    </location>
</feature>
<feature type="transmembrane region" description="Helical" evidence="3">
    <location>
        <begin position="276"/>
        <end position="296"/>
    </location>
</feature>
<feature type="transmembrane region" description="Helical" evidence="3">
    <location>
        <begin position="325"/>
        <end position="345"/>
    </location>
</feature>
<gene>
    <name evidence="1" type="primary">MT-ND2</name>
    <name type="synonym">MTND2</name>
    <name type="synonym">NADH2</name>
    <name type="synonym">ND2</name>
</gene>
<name>NU2M_NATTU</name>
<keyword id="KW-0249">Electron transport</keyword>
<keyword id="KW-0472">Membrane</keyword>
<keyword id="KW-0496">Mitochondrion</keyword>
<keyword id="KW-0999">Mitochondrion inner membrane</keyword>
<keyword id="KW-0520">NAD</keyword>
<keyword id="KW-0679">Respiratory chain</keyword>
<keyword id="KW-1278">Translocase</keyword>
<keyword id="KW-0812">Transmembrane</keyword>
<keyword id="KW-1133">Transmembrane helix</keyword>
<keyword id="KW-0813">Transport</keyword>
<keyword id="KW-0830">Ubiquinone</keyword>
<proteinExistence type="inferred from homology"/>
<dbReference type="EC" id="7.1.1.2" evidence="1"/>
<dbReference type="EMBL" id="AY504579">
    <property type="protein sequence ID" value="AAS91444.1"/>
    <property type="molecule type" value="Genomic_DNA"/>
</dbReference>
<dbReference type="SMR" id="Q330B3"/>
<dbReference type="GO" id="GO:0005743">
    <property type="term" value="C:mitochondrial inner membrane"/>
    <property type="evidence" value="ECO:0000250"/>
    <property type="project" value="UniProtKB"/>
</dbReference>
<dbReference type="GO" id="GO:0008137">
    <property type="term" value="F:NADH dehydrogenase (ubiquinone) activity"/>
    <property type="evidence" value="ECO:0000250"/>
    <property type="project" value="UniProtKB"/>
</dbReference>
<dbReference type="GO" id="GO:0006120">
    <property type="term" value="P:mitochondrial electron transport, NADH to ubiquinone"/>
    <property type="evidence" value="ECO:0000250"/>
    <property type="project" value="UniProtKB"/>
</dbReference>
<dbReference type="GO" id="GO:0032981">
    <property type="term" value="P:mitochondrial respiratory chain complex I assembly"/>
    <property type="evidence" value="ECO:0000250"/>
    <property type="project" value="UniProtKB"/>
</dbReference>
<dbReference type="InterPro" id="IPR050175">
    <property type="entry name" value="Complex_I_Subunit_2"/>
</dbReference>
<dbReference type="InterPro" id="IPR010933">
    <property type="entry name" value="NADH_DH_su2_C"/>
</dbReference>
<dbReference type="InterPro" id="IPR003917">
    <property type="entry name" value="NADH_UbQ_OxRdtase_chain2"/>
</dbReference>
<dbReference type="InterPro" id="IPR001750">
    <property type="entry name" value="ND/Mrp_TM"/>
</dbReference>
<dbReference type="PANTHER" id="PTHR46552">
    <property type="entry name" value="NADH-UBIQUINONE OXIDOREDUCTASE CHAIN 2"/>
    <property type="match status" value="1"/>
</dbReference>
<dbReference type="PANTHER" id="PTHR46552:SF1">
    <property type="entry name" value="NADH-UBIQUINONE OXIDOREDUCTASE CHAIN 2"/>
    <property type="match status" value="1"/>
</dbReference>
<dbReference type="Pfam" id="PF06444">
    <property type="entry name" value="NADH_dehy_S2_C"/>
    <property type="match status" value="1"/>
</dbReference>
<dbReference type="Pfam" id="PF00361">
    <property type="entry name" value="Proton_antipo_M"/>
    <property type="match status" value="1"/>
</dbReference>
<dbReference type="PRINTS" id="PR01436">
    <property type="entry name" value="NADHDHGNASE2"/>
</dbReference>
<evidence type="ECO:0000250" key="1">
    <source>
        <dbReference type="UniProtKB" id="P03891"/>
    </source>
</evidence>
<evidence type="ECO:0000250" key="2">
    <source>
        <dbReference type="UniProtKB" id="P03892"/>
    </source>
</evidence>
<evidence type="ECO:0000255" key="3"/>
<evidence type="ECO:0000305" key="4"/>
<sequence length="347" mass="38766">MNPLIFSTILATIIMGTVIVMTSSHWLTIWIGFEMNMLAIIPMLMKQHNPRSTEAATKYFLTQATASMLLMLAVIINLTHTGQWTITKSFNPLASIIMTIALTMKLGLSPFHFWVPEVAQGIPLSSCLILLTWQKLAPLSILYMISPTINLNLLLSMSLISIAIGGWGGLNQTQLRKIMAYSSIAHMGWMTAVLAYNPTMTMLNLLVYITMTTTMFMLLIKSASTTTLSLAIMWNKIPLVTTLTLTIMLSLGGLPPLTGFLPKWMIIQELTKNNNIILPTLMAIMALLSLYFYMRLTYATTLTMFPTTNDLKIKWQFEPKKHMNLLSPLIVTSTLTLPLAPTMLLLD</sequence>